<reference key="1">
    <citation type="journal article" date="2002" name="Proc. Natl. Acad. Sci. U.S.A.">
        <title>Complete genome sequence and comparative genomic analysis of an emerging human pathogen, serotype V Streptococcus agalactiae.</title>
        <authorList>
            <person name="Tettelin H."/>
            <person name="Masignani V."/>
            <person name="Cieslewicz M.J."/>
            <person name="Eisen J.A."/>
            <person name="Peterson S.N."/>
            <person name="Wessels M.R."/>
            <person name="Paulsen I.T."/>
            <person name="Nelson K.E."/>
            <person name="Margarit I."/>
            <person name="Read T.D."/>
            <person name="Madoff L.C."/>
            <person name="Wolf A.M."/>
            <person name="Beanan M.J."/>
            <person name="Brinkac L.M."/>
            <person name="Daugherty S.C."/>
            <person name="DeBoy R.T."/>
            <person name="Durkin A.S."/>
            <person name="Kolonay J.F."/>
            <person name="Madupu R."/>
            <person name="Lewis M.R."/>
            <person name="Radune D."/>
            <person name="Fedorova N.B."/>
            <person name="Scanlan D."/>
            <person name="Khouri H.M."/>
            <person name="Mulligan S."/>
            <person name="Carty H.A."/>
            <person name="Cline R.T."/>
            <person name="Van Aken S.E."/>
            <person name="Gill J."/>
            <person name="Scarselli M."/>
            <person name="Mora M."/>
            <person name="Iacobini E.T."/>
            <person name="Brettoni C."/>
            <person name="Galli G."/>
            <person name="Mariani M."/>
            <person name="Vegni F."/>
            <person name="Maione D."/>
            <person name="Rinaudo D."/>
            <person name="Rappuoli R."/>
            <person name="Telford J.L."/>
            <person name="Kasper D.L."/>
            <person name="Grandi G."/>
            <person name="Fraser C.M."/>
        </authorList>
    </citation>
    <scope>NUCLEOTIDE SEQUENCE [LARGE SCALE GENOMIC DNA]</scope>
    <source>
        <strain>ATCC BAA-611 / 2603 V/R</strain>
    </source>
</reference>
<dbReference type="EC" id="6.1.1.3" evidence="1"/>
<dbReference type="EMBL" id="AE009948">
    <property type="protein sequence ID" value="AAM99598.1"/>
    <property type="molecule type" value="Genomic_DNA"/>
</dbReference>
<dbReference type="RefSeq" id="NP_687726.1">
    <property type="nucleotide sequence ID" value="NC_004116.1"/>
</dbReference>
<dbReference type="RefSeq" id="WP_000591012.1">
    <property type="nucleotide sequence ID" value="NC_004116.1"/>
</dbReference>
<dbReference type="SMR" id="Q8E0L9"/>
<dbReference type="STRING" id="208435.SAG0711"/>
<dbReference type="KEGG" id="sag:SAG0711"/>
<dbReference type="PATRIC" id="fig|208435.3.peg.717"/>
<dbReference type="HOGENOM" id="CLU_008554_3_2_9"/>
<dbReference type="OrthoDB" id="9802304at2"/>
<dbReference type="Proteomes" id="UP000000821">
    <property type="component" value="Chromosome"/>
</dbReference>
<dbReference type="GO" id="GO:0005737">
    <property type="term" value="C:cytoplasm"/>
    <property type="evidence" value="ECO:0007669"/>
    <property type="project" value="UniProtKB-SubCell"/>
</dbReference>
<dbReference type="GO" id="GO:0005524">
    <property type="term" value="F:ATP binding"/>
    <property type="evidence" value="ECO:0007669"/>
    <property type="project" value="UniProtKB-UniRule"/>
</dbReference>
<dbReference type="GO" id="GO:0140096">
    <property type="term" value="F:catalytic activity, acting on a protein"/>
    <property type="evidence" value="ECO:0007669"/>
    <property type="project" value="UniProtKB-ARBA"/>
</dbReference>
<dbReference type="GO" id="GO:0046872">
    <property type="term" value="F:metal ion binding"/>
    <property type="evidence" value="ECO:0007669"/>
    <property type="project" value="UniProtKB-KW"/>
</dbReference>
<dbReference type="GO" id="GO:0004829">
    <property type="term" value="F:threonine-tRNA ligase activity"/>
    <property type="evidence" value="ECO:0007669"/>
    <property type="project" value="UniProtKB-UniRule"/>
</dbReference>
<dbReference type="GO" id="GO:0016740">
    <property type="term" value="F:transferase activity"/>
    <property type="evidence" value="ECO:0007669"/>
    <property type="project" value="UniProtKB-ARBA"/>
</dbReference>
<dbReference type="GO" id="GO:0000049">
    <property type="term" value="F:tRNA binding"/>
    <property type="evidence" value="ECO:0007669"/>
    <property type="project" value="UniProtKB-KW"/>
</dbReference>
<dbReference type="GO" id="GO:0006435">
    <property type="term" value="P:threonyl-tRNA aminoacylation"/>
    <property type="evidence" value="ECO:0007669"/>
    <property type="project" value="UniProtKB-UniRule"/>
</dbReference>
<dbReference type="CDD" id="cd01667">
    <property type="entry name" value="TGS_ThrRS"/>
    <property type="match status" value="1"/>
</dbReference>
<dbReference type="CDD" id="cd00860">
    <property type="entry name" value="ThrRS_anticodon"/>
    <property type="match status" value="1"/>
</dbReference>
<dbReference type="CDD" id="cd00771">
    <property type="entry name" value="ThrRS_core"/>
    <property type="match status" value="1"/>
</dbReference>
<dbReference type="FunFam" id="3.10.20.30:FF:000005">
    <property type="entry name" value="Threonine--tRNA ligase"/>
    <property type="match status" value="1"/>
</dbReference>
<dbReference type="FunFam" id="3.30.54.20:FF:000002">
    <property type="entry name" value="Threonine--tRNA ligase"/>
    <property type="match status" value="1"/>
</dbReference>
<dbReference type="FunFam" id="3.30.930.10:FF:000002">
    <property type="entry name" value="Threonine--tRNA ligase"/>
    <property type="match status" value="1"/>
</dbReference>
<dbReference type="FunFam" id="3.40.50.800:FF:000001">
    <property type="entry name" value="Threonine--tRNA ligase"/>
    <property type="match status" value="1"/>
</dbReference>
<dbReference type="FunFam" id="3.30.980.10:FF:000005">
    <property type="entry name" value="Threonyl-tRNA synthetase, mitochondrial"/>
    <property type="match status" value="1"/>
</dbReference>
<dbReference type="Gene3D" id="3.10.20.30">
    <property type="match status" value="1"/>
</dbReference>
<dbReference type="Gene3D" id="3.30.54.20">
    <property type="match status" value="1"/>
</dbReference>
<dbReference type="Gene3D" id="3.40.50.800">
    <property type="entry name" value="Anticodon-binding domain"/>
    <property type="match status" value="1"/>
</dbReference>
<dbReference type="Gene3D" id="3.30.930.10">
    <property type="entry name" value="Bira Bifunctional Protein, Domain 2"/>
    <property type="match status" value="1"/>
</dbReference>
<dbReference type="Gene3D" id="3.30.980.10">
    <property type="entry name" value="Threonyl-trna Synthetase, Chain A, domain 2"/>
    <property type="match status" value="1"/>
</dbReference>
<dbReference type="HAMAP" id="MF_00184">
    <property type="entry name" value="Thr_tRNA_synth"/>
    <property type="match status" value="1"/>
</dbReference>
<dbReference type="InterPro" id="IPR002314">
    <property type="entry name" value="aa-tRNA-synt_IIb"/>
</dbReference>
<dbReference type="InterPro" id="IPR006195">
    <property type="entry name" value="aa-tRNA-synth_II"/>
</dbReference>
<dbReference type="InterPro" id="IPR045864">
    <property type="entry name" value="aa-tRNA-synth_II/BPL/LPL"/>
</dbReference>
<dbReference type="InterPro" id="IPR004154">
    <property type="entry name" value="Anticodon-bd"/>
</dbReference>
<dbReference type="InterPro" id="IPR036621">
    <property type="entry name" value="Anticodon-bd_dom_sf"/>
</dbReference>
<dbReference type="InterPro" id="IPR012675">
    <property type="entry name" value="Beta-grasp_dom_sf"/>
</dbReference>
<dbReference type="InterPro" id="IPR004095">
    <property type="entry name" value="TGS"/>
</dbReference>
<dbReference type="InterPro" id="IPR012676">
    <property type="entry name" value="TGS-like"/>
</dbReference>
<dbReference type="InterPro" id="IPR002320">
    <property type="entry name" value="Thr-tRNA-ligase_IIa"/>
</dbReference>
<dbReference type="InterPro" id="IPR018163">
    <property type="entry name" value="Thr/Ala-tRNA-synth_IIc_edit"/>
</dbReference>
<dbReference type="InterPro" id="IPR047246">
    <property type="entry name" value="ThrRS_anticodon"/>
</dbReference>
<dbReference type="InterPro" id="IPR033728">
    <property type="entry name" value="ThrRS_core"/>
</dbReference>
<dbReference type="InterPro" id="IPR012947">
    <property type="entry name" value="tRNA_SAD"/>
</dbReference>
<dbReference type="NCBIfam" id="TIGR00418">
    <property type="entry name" value="thrS"/>
    <property type="match status" value="1"/>
</dbReference>
<dbReference type="PANTHER" id="PTHR11451:SF56">
    <property type="entry name" value="THREONINE--TRNA LIGASE 1"/>
    <property type="match status" value="1"/>
</dbReference>
<dbReference type="PANTHER" id="PTHR11451">
    <property type="entry name" value="THREONINE-TRNA LIGASE"/>
    <property type="match status" value="1"/>
</dbReference>
<dbReference type="Pfam" id="PF03129">
    <property type="entry name" value="HGTP_anticodon"/>
    <property type="match status" value="1"/>
</dbReference>
<dbReference type="Pfam" id="PF02824">
    <property type="entry name" value="TGS"/>
    <property type="match status" value="1"/>
</dbReference>
<dbReference type="Pfam" id="PF00587">
    <property type="entry name" value="tRNA-synt_2b"/>
    <property type="match status" value="1"/>
</dbReference>
<dbReference type="Pfam" id="PF07973">
    <property type="entry name" value="tRNA_SAD"/>
    <property type="match status" value="1"/>
</dbReference>
<dbReference type="PRINTS" id="PR01047">
    <property type="entry name" value="TRNASYNTHTHR"/>
</dbReference>
<dbReference type="SMART" id="SM00863">
    <property type="entry name" value="tRNA_SAD"/>
    <property type="match status" value="1"/>
</dbReference>
<dbReference type="SUPFAM" id="SSF52954">
    <property type="entry name" value="Class II aaRS ABD-related"/>
    <property type="match status" value="1"/>
</dbReference>
<dbReference type="SUPFAM" id="SSF55681">
    <property type="entry name" value="Class II aaRS and biotin synthetases"/>
    <property type="match status" value="1"/>
</dbReference>
<dbReference type="SUPFAM" id="SSF81271">
    <property type="entry name" value="TGS-like"/>
    <property type="match status" value="1"/>
</dbReference>
<dbReference type="SUPFAM" id="SSF55186">
    <property type="entry name" value="ThrRS/AlaRS common domain"/>
    <property type="match status" value="1"/>
</dbReference>
<dbReference type="PROSITE" id="PS50862">
    <property type="entry name" value="AA_TRNA_LIGASE_II"/>
    <property type="match status" value="1"/>
</dbReference>
<dbReference type="PROSITE" id="PS51880">
    <property type="entry name" value="TGS"/>
    <property type="match status" value="1"/>
</dbReference>
<gene>
    <name evidence="1" type="primary">thrS</name>
    <name type="ordered locus">SAG0711</name>
</gene>
<evidence type="ECO:0000255" key="1">
    <source>
        <dbReference type="HAMAP-Rule" id="MF_00184"/>
    </source>
</evidence>
<evidence type="ECO:0000255" key="2">
    <source>
        <dbReference type="PROSITE-ProRule" id="PRU01228"/>
    </source>
</evidence>
<proteinExistence type="inferred from homology"/>
<organism>
    <name type="scientific">Streptococcus agalactiae serotype V (strain ATCC BAA-611 / 2603 V/R)</name>
    <dbReference type="NCBI Taxonomy" id="208435"/>
    <lineage>
        <taxon>Bacteria</taxon>
        <taxon>Bacillati</taxon>
        <taxon>Bacillota</taxon>
        <taxon>Bacilli</taxon>
        <taxon>Lactobacillales</taxon>
        <taxon>Streptococcaceae</taxon>
        <taxon>Streptococcus</taxon>
    </lineage>
</organism>
<comment type="function">
    <text evidence="1">Catalyzes the attachment of threonine to tRNA(Thr) in a two-step reaction: L-threonine is first activated by ATP to form Thr-AMP and then transferred to the acceptor end of tRNA(Thr). Also edits incorrectly charged L-seryl-tRNA(Thr).</text>
</comment>
<comment type="catalytic activity">
    <reaction evidence="1">
        <text>tRNA(Thr) + L-threonine + ATP = L-threonyl-tRNA(Thr) + AMP + diphosphate + H(+)</text>
        <dbReference type="Rhea" id="RHEA:24624"/>
        <dbReference type="Rhea" id="RHEA-COMP:9670"/>
        <dbReference type="Rhea" id="RHEA-COMP:9704"/>
        <dbReference type="ChEBI" id="CHEBI:15378"/>
        <dbReference type="ChEBI" id="CHEBI:30616"/>
        <dbReference type="ChEBI" id="CHEBI:33019"/>
        <dbReference type="ChEBI" id="CHEBI:57926"/>
        <dbReference type="ChEBI" id="CHEBI:78442"/>
        <dbReference type="ChEBI" id="CHEBI:78534"/>
        <dbReference type="ChEBI" id="CHEBI:456215"/>
        <dbReference type="EC" id="6.1.1.3"/>
    </reaction>
</comment>
<comment type="cofactor">
    <cofactor evidence="1">
        <name>Zn(2+)</name>
        <dbReference type="ChEBI" id="CHEBI:29105"/>
    </cofactor>
    <text evidence="1">Binds 1 zinc ion per subunit.</text>
</comment>
<comment type="subunit">
    <text evidence="1">Homodimer.</text>
</comment>
<comment type="subcellular location">
    <subcellularLocation>
        <location evidence="1">Cytoplasm</location>
    </subcellularLocation>
</comment>
<comment type="similarity">
    <text evidence="1">Belongs to the class-II aminoacyl-tRNA synthetase family.</text>
</comment>
<sequence length="647" mass="74570">MIKITFPDGAIREFESGITTFEIAQSISNSLAKKALAGKFNGQLIDTTRAIEEDGSIEIVTPDHEDALGVLRHSAAHLFAQAAKRLFPDLCLGVGPAIQDGFYYDTDNKSGQISNDDLPRIEEEMKKIVKENHPCIREEISKEEALELFKDDPYKVELISEHAEDGLTVYRQGEFVDLCRGPHVPSTGRIQVFHLLNVAGAYWRGNSDNAMMQRVYGTAWFDKKDLKAYLKRREEAKERDHRKLGKELDLFMVNPEVGQGLPFWLPNGATIRRELERYIVDKEIASGYQHVYTPPMASVEFYKTSGHWDHYREDMFPTMDMGDGEEFVLRPMNCPHHIEVYKHHVHSYRELPIRIAELGMMHRYEKSGALTGLQRVREMTLNDAHIFVTPEQIKDEFLKALNLIAEIYEDFNLTDYRFRLSYRDPEDKHKYYDNDEMWENAQAMLKEAMDDFGLDYFEAEGEAAFYGPKLDIQVKTALGNEETLSTIQLDFLLPERFDLKYIGADGEEHRPIMIHRGGISTMERFTAILIETYKGAFPTWLAPQQVSVIPISNEAHIDYAWEVARVLKDRGIRAEVDDRNEKMQYKIRAAQTQKIPYQLIVGDKEMEEKAVNVRRYGSKATETKSIEEFVESILADIARKSRPDEVK</sequence>
<feature type="chain" id="PRO_0000101056" description="Threonine--tRNA ligase">
    <location>
        <begin position="1"/>
        <end position="647"/>
    </location>
</feature>
<feature type="domain" description="TGS" evidence="2">
    <location>
        <begin position="1"/>
        <end position="61"/>
    </location>
</feature>
<feature type="region of interest" description="Catalytic" evidence="1">
    <location>
        <begin position="240"/>
        <end position="538"/>
    </location>
</feature>
<feature type="binding site" evidence="1">
    <location>
        <position position="334"/>
    </location>
    <ligand>
        <name>Zn(2+)</name>
        <dbReference type="ChEBI" id="CHEBI:29105"/>
    </ligand>
</feature>
<feature type="binding site" evidence="1">
    <location>
        <position position="385"/>
    </location>
    <ligand>
        <name>Zn(2+)</name>
        <dbReference type="ChEBI" id="CHEBI:29105"/>
    </ligand>
</feature>
<feature type="binding site" evidence="1">
    <location>
        <position position="515"/>
    </location>
    <ligand>
        <name>Zn(2+)</name>
        <dbReference type="ChEBI" id="CHEBI:29105"/>
    </ligand>
</feature>
<accession>Q8E0L9</accession>
<name>SYT_STRA5</name>
<protein>
    <recommendedName>
        <fullName evidence="1">Threonine--tRNA ligase</fullName>
        <ecNumber evidence="1">6.1.1.3</ecNumber>
    </recommendedName>
    <alternativeName>
        <fullName evidence="1">Threonyl-tRNA synthetase</fullName>
        <shortName evidence="1">ThrRS</shortName>
    </alternativeName>
</protein>
<keyword id="KW-0030">Aminoacyl-tRNA synthetase</keyword>
<keyword id="KW-0067">ATP-binding</keyword>
<keyword id="KW-0963">Cytoplasm</keyword>
<keyword id="KW-0436">Ligase</keyword>
<keyword id="KW-0479">Metal-binding</keyword>
<keyword id="KW-0547">Nucleotide-binding</keyword>
<keyword id="KW-0648">Protein biosynthesis</keyword>
<keyword id="KW-1185">Reference proteome</keyword>
<keyword id="KW-0694">RNA-binding</keyword>
<keyword id="KW-0820">tRNA-binding</keyword>
<keyword id="KW-0862">Zinc</keyword>